<comment type="function">
    <text evidence="1">Involved in the gluconeogenesis. Catalyzes stereospecifically the conversion of dihydroxyacetone phosphate (DHAP) to D-glyceraldehyde-3-phosphate (G3P).</text>
</comment>
<comment type="catalytic activity">
    <reaction evidence="1">
        <text>D-glyceraldehyde 3-phosphate = dihydroxyacetone phosphate</text>
        <dbReference type="Rhea" id="RHEA:18585"/>
        <dbReference type="ChEBI" id="CHEBI:57642"/>
        <dbReference type="ChEBI" id="CHEBI:59776"/>
        <dbReference type="EC" id="5.3.1.1"/>
    </reaction>
</comment>
<comment type="pathway">
    <text evidence="1">Carbohydrate biosynthesis; gluconeogenesis.</text>
</comment>
<comment type="pathway">
    <text evidence="1">Carbohydrate degradation; glycolysis; D-glyceraldehyde 3-phosphate from glycerone phosphate: step 1/1.</text>
</comment>
<comment type="subunit">
    <text evidence="1">Homodimer.</text>
</comment>
<comment type="subcellular location">
    <subcellularLocation>
        <location evidence="1">Cytoplasm</location>
    </subcellularLocation>
</comment>
<comment type="similarity">
    <text evidence="1">Belongs to the triosephosphate isomerase family.</text>
</comment>
<dbReference type="EC" id="5.3.1.1" evidence="1"/>
<dbReference type="EMBL" id="CP000924">
    <property type="protein sequence ID" value="ABY94393.1"/>
    <property type="molecule type" value="Genomic_DNA"/>
</dbReference>
<dbReference type="SMR" id="B0K880"/>
<dbReference type="STRING" id="340099.Teth39_0733"/>
<dbReference type="KEGG" id="tpd:Teth39_0733"/>
<dbReference type="eggNOG" id="COG0149">
    <property type="taxonomic scope" value="Bacteria"/>
</dbReference>
<dbReference type="HOGENOM" id="CLU_024251_2_3_9"/>
<dbReference type="UniPathway" id="UPA00109">
    <property type="reaction ID" value="UER00189"/>
</dbReference>
<dbReference type="UniPathway" id="UPA00138"/>
<dbReference type="Proteomes" id="UP000002156">
    <property type="component" value="Chromosome"/>
</dbReference>
<dbReference type="GO" id="GO:0005829">
    <property type="term" value="C:cytosol"/>
    <property type="evidence" value="ECO:0007669"/>
    <property type="project" value="TreeGrafter"/>
</dbReference>
<dbReference type="GO" id="GO:0004807">
    <property type="term" value="F:triose-phosphate isomerase activity"/>
    <property type="evidence" value="ECO:0007669"/>
    <property type="project" value="UniProtKB-UniRule"/>
</dbReference>
<dbReference type="GO" id="GO:0006094">
    <property type="term" value="P:gluconeogenesis"/>
    <property type="evidence" value="ECO:0007669"/>
    <property type="project" value="UniProtKB-UniRule"/>
</dbReference>
<dbReference type="GO" id="GO:0046166">
    <property type="term" value="P:glyceraldehyde-3-phosphate biosynthetic process"/>
    <property type="evidence" value="ECO:0007669"/>
    <property type="project" value="TreeGrafter"/>
</dbReference>
<dbReference type="GO" id="GO:0019563">
    <property type="term" value="P:glycerol catabolic process"/>
    <property type="evidence" value="ECO:0007669"/>
    <property type="project" value="TreeGrafter"/>
</dbReference>
<dbReference type="GO" id="GO:0006096">
    <property type="term" value="P:glycolytic process"/>
    <property type="evidence" value="ECO:0007669"/>
    <property type="project" value="UniProtKB-UniRule"/>
</dbReference>
<dbReference type="CDD" id="cd00311">
    <property type="entry name" value="TIM"/>
    <property type="match status" value="1"/>
</dbReference>
<dbReference type="FunFam" id="3.20.20.70:FF:000016">
    <property type="entry name" value="Triosephosphate isomerase"/>
    <property type="match status" value="1"/>
</dbReference>
<dbReference type="Gene3D" id="3.20.20.70">
    <property type="entry name" value="Aldolase class I"/>
    <property type="match status" value="1"/>
</dbReference>
<dbReference type="HAMAP" id="MF_00147_B">
    <property type="entry name" value="TIM_B"/>
    <property type="match status" value="1"/>
</dbReference>
<dbReference type="InterPro" id="IPR013785">
    <property type="entry name" value="Aldolase_TIM"/>
</dbReference>
<dbReference type="InterPro" id="IPR035990">
    <property type="entry name" value="TIM_sf"/>
</dbReference>
<dbReference type="InterPro" id="IPR022896">
    <property type="entry name" value="TrioseP_Isoase_bac/euk"/>
</dbReference>
<dbReference type="InterPro" id="IPR000652">
    <property type="entry name" value="Triosephosphate_isomerase"/>
</dbReference>
<dbReference type="InterPro" id="IPR020861">
    <property type="entry name" value="Triosephosphate_isomerase_AS"/>
</dbReference>
<dbReference type="NCBIfam" id="TIGR00419">
    <property type="entry name" value="tim"/>
    <property type="match status" value="1"/>
</dbReference>
<dbReference type="PANTHER" id="PTHR21139">
    <property type="entry name" value="TRIOSEPHOSPHATE ISOMERASE"/>
    <property type="match status" value="1"/>
</dbReference>
<dbReference type="PANTHER" id="PTHR21139:SF42">
    <property type="entry name" value="TRIOSEPHOSPHATE ISOMERASE"/>
    <property type="match status" value="1"/>
</dbReference>
<dbReference type="Pfam" id="PF00121">
    <property type="entry name" value="TIM"/>
    <property type="match status" value="1"/>
</dbReference>
<dbReference type="SUPFAM" id="SSF51351">
    <property type="entry name" value="Triosephosphate isomerase (TIM)"/>
    <property type="match status" value="1"/>
</dbReference>
<dbReference type="PROSITE" id="PS00171">
    <property type="entry name" value="TIM_1"/>
    <property type="match status" value="1"/>
</dbReference>
<dbReference type="PROSITE" id="PS51440">
    <property type="entry name" value="TIM_2"/>
    <property type="match status" value="1"/>
</dbReference>
<organism>
    <name type="scientific">Thermoanaerobacter pseudethanolicus (strain ATCC 33223 / 39E)</name>
    <name type="common">Clostridium thermohydrosulfuricum</name>
    <dbReference type="NCBI Taxonomy" id="340099"/>
    <lineage>
        <taxon>Bacteria</taxon>
        <taxon>Bacillati</taxon>
        <taxon>Bacillota</taxon>
        <taxon>Clostridia</taxon>
        <taxon>Thermoanaerobacterales</taxon>
        <taxon>Thermoanaerobacteraceae</taxon>
        <taxon>Thermoanaerobacter</taxon>
    </lineage>
</organism>
<sequence>MRRPIIAGNWKMHMTPSEAVKLVEELIPQVKDAKAEVVVIPPFVDLTEVNKVIQGTNILLGAQDMFWEEKGAYTGEISPLMLKEIGVKYVVIGHSERRQYFGETDEMVNKKVLSALSHGLSPIVCVGESLSQREEGKTFEVVLNQTKEALKGVSHDDIVNVVIAYEPIWAIGTGKTATAKDANEVIKALRNTIASLYGKEKASLVRIQYGGSVKPENISELMAESDIDGALVGGASLVASDFAKIVNY</sequence>
<feature type="chain" id="PRO_1000096542" description="Triosephosphate isomerase">
    <location>
        <begin position="1"/>
        <end position="248"/>
    </location>
</feature>
<feature type="active site" description="Electrophile" evidence="1">
    <location>
        <position position="94"/>
    </location>
</feature>
<feature type="active site" description="Proton acceptor" evidence="1">
    <location>
        <position position="166"/>
    </location>
</feature>
<feature type="binding site" evidence="1">
    <location>
        <begin position="9"/>
        <end position="11"/>
    </location>
    <ligand>
        <name>substrate</name>
    </ligand>
</feature>
<feature type="binding site" evidence="1">
    <location>
        <position position="172"/>
    </location>
    <ligand>
        <name>substrate</name>
    </ligand>
</feature>
<feature type="binding site" evidence="1">
    <location>
        <position position="212"/>
    </location>
    <ligand>
        <name>substrate</name>
    </ligand>
</feature>
<feature type="binding site" evidence="1">
    <location>
        <begin position="233"/>
        <end position="234"/>
    </location>
    <ligand>
        <name>substrate</name>
    </ligand>
</feature>
<gene>
    <name evidence="1" type="primary">tpiA</name>
    <name type="ordered locus">Teth39_0733</name>
</gene>
<name>TPIS_THEP3</name>
<protein>
    <recommendedName>
        <fullName evidence="1">Triosephosphate isomerase</fullName>
        <shortName evidence="1">TIM</shortName>
        <shortName evidence="1">TPI</shortName>
        <ecNumber evidence="1">5.3.1.1</ecNumber>
    </recommendedName>
    <alternativeName>
        <fullName evidence="1">Triose-phosphate isomerase</fullName>
    </alternativeName>
</protein>
<proteinExistence type="inferred from homology"/>
<accession>B0K880</accession>
<reference key="1">
    <citation type="submission" date="2008-01" db="EMBL/GenBank/DDBJ databases">
        <title>Complete sequence of Thermoanaerobacter pseudethanolicus 39E.</title>
        <authorList>
            <person name="Copeland A."/>
            <person name="Lucas S."/>
            <person name="Lapidus A."/>
            <person name="Barry K."/>
            <person name="Glavina del Rio T."/>
            <person name="Dalin E."/>
            <person name="Tice H."/>
            <person name="Pitluck S."/>
            <person name="Bruce D."/>
            <person name="Goodwin L."/>
            <person name="Saunders E."/>
            <person name="Brettin T."/>
            <person name="Detter J.C."/>
            <person name="Han C."/>
            <person name="Schmutz J."/>
            <person name="Larimer F."/>
            <person name="Land M."/>
            <person name="Hauser L."/>
            <person name="Kyrpides N."/>
            <person name="Lykidis A."/>
            <person name="Hemme C."/>
            <person name="Fields M.W."/>
            <person name="He Z."/>
            <person name="Zhou J."/>
            <person name="Richardson P."/>
        </authorList>
    </citation>
    <scope>NUCLEOTIDE SEQUENCE [LARGE SCALE GENOMIC DNA]</scope>
    <source>
        <strain>ATCC 33223 / DSM 2355 / 39E</strain>
    </source>
</reference>
<evidence type="ECO:0000255" key="1">
    <source>
        <dbReference type="HAMAP-Rule" id="MF_00147"/>
    </source>
</evidence>
<keyword id="KW-0963">Cytoplasm</keyword>
<keyword id="KW-0312">Gluconeogenesis</keyword>
<keyword id="KW-0324">Glycolysis</keyword>
<keyword id="KW-0413">Isomerase</keyword>
<keyword id="KW-1185">Reference proteome</keyword>